<gene>
    <name type="ORF">ORF59a</name>
</gene>
<evidence type="ECO:0000255" key="1">
    <source>
        <dbReference type="PROSITE-ProRule" id="PRU00042"/>
    </source>
</evidence>
<evidence type="ECO:0007829" key="2">
    <source>
        <dbReference type="PDB" id="2LVH"/>
    </source>
</evidence>
<reference key="1">
    <citation type="journal article" date="2003" name="Virology">
        <title>AFV1, a novel virus infecting hyperthermophilic archaea of the genus acidianus.</title>
        <authorList>
            <person name="Bettstetter M."/>
            <person name="Peng X."/>
            <person name="Garrett R.A."/>
            <person name="Prangishvili D."/>
        </authorList>
    </citation>
    <scope>NUCLEOTIDE SEQUENCE [GENOMIC DNA]</scope>
</reference>
<organismHost>
    <name type="scientific">Acidianus hospitalis</name>
    <dbReference type="NCBI Taxonomy" id="563177"/>
</organismHost>
<organismHost>
    <name type="scientific">Acidianus infernus</name>
    <dbReference type="NCBI Taxonomy" id="12915"/>
</organismHost>
<sequence>MIEVSSMERVYQCLRCGLTFRTKKQLIRHLVNTEKVNPLSIDYYYQSFSVSLKDVNKII</sequence>
<dbReference type="EMBL" id="AJ567472">
    <property type="protein sequence ID" value="CAD98935.1"/>
    <property type="molecule type" value="Genomic_DNA"/>
</dbReference>
<dbReference type="RefSeq" id="YP_003731.1">
    <property type="nucleotide sequence ID" value="NC_005830.1"/>
</dbReference>
<dbReference type="PDB" id="2LVH">
    <property type="method" value="NMR"/>
    <property type="chains" value="A=1-59"/>
</dbReference>
<dbReference type="PDBsum" id="2LVH"/>
<dbReference type="BMRB" id="Q70LE5"/>
<dbReference type="SMR" id="Q70LE5"/>
<dbReference type="KEGG" id="vg:2769185"/>
<dbReference type="EvolutionaryTrace" id="Q70LE5"/>
<dbReference type="Proteomes" id="UP000000514">
    <property type="component" value="Genome"/>
</dbReference>
<dbReference type="GO" id="GO:0008270">
    <property type="term" value="F:zinc ion binding"/>
    <property type="evidence" value="ECO:0007669"/>
    <property type="project" value="UniProtKB-KW"/>
</dbReference>
<dbReference type="FunFam" id="3.30.160.60:FF:000065">
    <property type="entry name" value="B-cell CLL/lymphoma 6, member B"/>
    <property type="match status" value="1"/>
</dbReference>
<dbReference type="Gene3D" id="3.30.160.60">
    <property type="entry name" value="Classic Zinc Finger"/>
    <property type="match status" value="1"/>
</dbReference>
<dbReference type="InterPro" id="IPR036236">
    <property type="entry name" value="Znf_C2H2_sf"/>
</dbReference>
<dbReference type="InterPro" id="IPR013087">
    <property type="entry name" value="Znf_C2H2_type"/>
</dbReference>
<dbReference type="SUPFAM" id="SSF57667">
    <property type="entry name" value="beta-beta-alpha zinc fingers"/>
    <property type="match status" value="1"/>
</dbReference>
<dbReference type="PROSITE" id="PS50157">
    <property type="entry name" value="ZINC_FINGER_C2H2_2"/>
    <property type="match status" value="1"/>
</dbReference>
<accession>Q70LE5</accession>
<keyword id="KW-0002">3D-structure</keyword>
<keyword id="KW-0479">Metal-binding</keyword>
<keyword id="KW-1185">Reference proteome</keyword>
<keyword id="KW-0862">Zinc</keyword>
<keyword id="KW-0863">Zinc-finger</keyword>
<protein>
    <recommendedName>
        <fullName>Putative zinc finger protein ORF59a</fullName>
    </recommendedName>
</protein>
<organism>
    <name type="scientific">Acidianus filamentous virus 1 (isolate United States/Yellowstone)</name>
    <name type="common">AFV-1</name>
    <dbReference type="NCBI Taxonomy" id="654909"/>
    <lineage>
        <taxon>Viruses</taxon>
        <taxon>Adnaviria</taxon>
        <taxon>Zilligvirae</taxon>
        <taxon>Taleaviricota</taxon>
        <taxon>Tokiviricetes</taxon>
        <taxon>Ligamenvirales</taxon>
        <taxon>Ungulaviridae</taxon>
        <taxon>Captovirus</taxon>
        <taxon>Acidianus filamentous virus 1</taxon>
    </lineage>
</organism>
<proteinExistence type="evidence at protein level"/>
<name>Y059A_AFV1Y</name>
<feature type="chain" id="PRO_0000384536" description="Putative zinc finger protein ORF59a">
    <location>
        <begin position="1"/>
        <end position="59"/>
    </location>
</feature>
<feature type="zinc finger region" description="C2H2-type; degenerate" evidence="1">
    <location>
        <begin position="11"/>
        <end position="33"/>
    </location>
</feature>
<feature type="strand" evidence="2">
    <location>
        <begin position="8"/>
        <end position="13"/>
    </location>
</feature>
<feature type="turn" evidence="2">
    <location>
        <begin position="14"/>
        <end position="16"/>
    </location>
</feature>
<feature type="strand" evidence="2">
    <location>
        <begin position="19"/>
        <end position="22"/>
    </location>
</feature>
<feature type="helix" evidence="2">
    <location>
        <begin position="23"/>
        <end position="32"/>
    </location>
</feature>
<feature type="helix" evidence="2">
    <location>
        <begin position="41"/>
        <end position="43"/>
    </location>
</feature>
<feature type="strand" evidence="2">
    <location>
        <begin position="45"/>
        <end position="50"/>
    </location>
</feature>